<reference key="1">
    <citation type="journal article" date="1999" name="Yeast">
        <title>Hansenula polymorpha Pex1p and Pex6p are peroxisome-associated AAA proteins that functionally and physically interact.</title>
        <authorList>
            <person name="Kiel J.A.K.W."/>
            <person name="Hilbrands R.E."/>
            <person name="van der Klei I.J."/>
            <person name="Rasmussen S.W."/>
            <person name="Salomons F.A."/>
            <person name="van der Heide M."/>
            <person name="Faber K.N."/>
            <person name="Cregg J.M."/>
            <person name="Veenhuis M."/>
        </authorList>
    </citation>
    <scope>NUCLEOTIDE SEQUENCE [GENOMIC DNA]</scope>
    <scope>INTERACTION WITH PEX1</scope>
    <source>
        <strain>ATCC 34438 / CBS 4732 / DSM 70277 / JCM 3621 / NBRC 1476 / NRRL Y-5445</strain>
    </source>
</reference>
<proteinExistence type="evidence at protein level"/>
<evidence type="ECO:0000250" key="1">
    <source>
        <dbReference type="UniProtKB" id="P33760"/>
    </source>
</evidence>
<evidence type="ECO:0000255" key="2"/>
<evidence type="ECO:0000305" key="3"/>
<organism>
    <name type="scientific">Pichia angusta</name>
    <name type="common">Yeast</name>
    <name type="synonym">Hansenula polymorpha</name>
    <dbReference type="NCBI Taxonomy" id="870730"/>
    <lineage>
        <taxon>Eukaryota</taxon>
        <taxon>Fungi</taxon>
        <taxon>Dikarya</taxon>
        <taxon>Ascomycota</taxon>
        <taxon>Saccharomycotina</taxon>
        <taxon>Pichiomycetes</taxon>
        <taxon>Pichiales</taxon>
        <taxon>Pichiaceae</taxon>
        <taxon>Ogataea</taxon>
    </lineage>
</organism>
<keyword id="KW-0067">ATP-binding</keyword>
<keyword id="KW-0963">Cytoplasm</keyword>
<keyword id="KW-0378">Hydrolase</keyword>
<keyword id="KW-0472">Membrane</keyword>
<keyword id="KW-0547">Nucleotide-binding</keyword>
<keyword id="KW-0576">Peroxisome</keyword>
<keyword id="KW-0962">Peroxisome biogenesis</keyword>
<comment type="function">
    <text evidence="1">Component of the PEX1-PEX6 AAA ATPase complex, a protein dislocase complex that mediates the ATP-dependent extraction of the PEX5 receptor from peroxisomal membranes, an essential step for PEX5 recycling. Specifically recognizes PEX5 monoubiquitinated at 'Cys-6', and pulls it out of the peroxisome lumen through the PEX2-PEX10-PEX12 retrotranslocation channel. Extraction by the PEX1-PEX6 AAA ATPase complex is accompanied by unfolding of the TPR repeats and release of bound cargo from PEX5.</text>
</comment>
<comment type="catalytic activity">
    <reaction evidence="1">
        <text>ATP + H2O = ADP + phosphate + H(+)</text>
        <dbReference type="Rhea" id="RHEA:13065"/>
        <dbReference type="ChEBI" id="CHEBI:15377"/>
        <dbReference type="ChEBI" id="CHEBI:15378"/>
        <dbReference type="ChEBI" id="CHEBI:30616"/>
        <dbReference type="ChEBI" id="CHEBI:43474"/>
        <dbReference type="ChEBI" id="CHEBI:456216"/>
    </reaction>
    <physiologicalReaction direction="left-to-right" evidence="1">
        <dbReference type="Rhea" id="RHEA:13066"/>
    </physiologicalReaction>
</comment>
<comment type="subunit">
    <text evidence="1">Interacts with PEX1; forming the PEX1-PEX6 AAA ATPase complex, which is composed of a heterohexamer formed by a trimer of PEX1-PEX6 dimers.</text>
</comment>
<comment type="subcellular location">
    <subcellularLocation>
        <location evidence="1">Cytoplasm</location>
        <location evidence="1">Cytosol</location>
    </subcellularLocation>
    <subcellularLocation>
        <location evidence="1">Peroxisome membrane</location>
        <topology evidence="1">Peripheral membrane protein</topology>
        <orientation evidence="1">Cytoplasmic side</orientation>
    </subcellularLocation>
</comment>
<comment type="similarity">
    <text evidence="3">Belongs to the AAA ATPase family.</text>
</comment>
<feature type="chain" id="PRO_0000084617" description="Peroxisomal ATPase PEX6">
    <location>
        <begin position="1"/>
        <end position="1135"/>
    </location>
</feature>
<feature type="binding site" evidence="2">
    <location>
        <begin position="853"/>
        <end position="860"/>
    </location>
    <ligand>
        <name>ATP</name>
        <dbReference type="ChEBI" id="CHEBI:30616"/>
    </ligand>
</feature>
<sequence>MPGLVEAPVEPYARPVRTLVQLALDPDDGLEYVSLNSQVYELIYGDLSDNKTRFVSLQLLGSPLFVEYQLFRAELDSELPQDSIELHSPRLSSKYGSDFTLEKCIVVPVTKVLSLTSVIMSFPHDVYRLIEGISKERLLEIVASERGSDAGHILIRKTDFLKTLHGEVIHCEPVDQGFLSSDTNLVIVKQEGLKRGVNGNVNGSHPDPSEIPVSTPVDFSVSHLGLGDLTFDDTSIFSNLTLQPLELQIGFLKYSMLMDCTHILESSHEFDHEDDQLFACVCSSVLQKLGCFSGDLVQIQTCDCGAGIVCACDKSARRKITIRVFSLADPNDFDPEKLYLSPIFLNSIGNPRIVFVKRLASQRPNGDFVCEKLENHVPVAKEVVIARVASPITLDRTMQHLFLSNLKTYFESKHRVIVKDQYIPVPIDTVLAKSLFSTYNASGDETQPEIIPQGIPNELAWFKITDGTTETDDGKSLVAGKQYIIDPAKTRMIQSGVCSDKVPLSDGISYSQLRDYFELPRQFAYPCLRISNVLTFPYANQLRKIVSVAFRIRDNSYSRSRVQTTILLSSMARCVGKATLVRRIATEFGANLLELDAYDLLNQASVSKTIGTIRGKSDRVVDSCCSVILYIRHIEALAKKPDPNQQQKDSMSLRLAELIDEYTSKGAIFIGSTNDADAISELIRSKFKFDISINVPTEPERKLILTDLLDDMKTKDKTPVVLRPDVSLDTLALQSAGLTANDLVSIVDNTITIAIERLERLSEEQKVNWDQLLSFNGGRIKLTPEDFETSINDARNKFSDMIGAPRIPDVKWEDVGGLDVVKDEILDTIEMPLKHPELFSKGMKKRSGILFYGPPGTGKTLLAKAIATNFALNFFSVKGPELLNMYIGESEANVRRVFQKARDAKPCVIFFDELDSVAPKRGNQGDSGGVMDRIVSQLLAELDGMSGAEGGDGVFVVGATNRPDLLDEALLRPGRFDKMLYLGIADTHEKQAKIIQALTRKFQLDPSVDLGRIAETCPFTYTGADFYALCSDAMLNAMTRTAGAVEKKINEYNCNREEGDKISTRFWFDNIAKPEDTQVLVKSEDFAKARDELVPSVSAEELQHYLSVRENFEGGKTQDVMHTVPDGADIIISHD</sequence>
<gene>
    <name type="primary">PEX6</name>
</gene>
<name>PEX6_PICAN</name>
<protein>
    <recommendedName>
        <fullName evidence="3">Peroxisomal ATPase PEX6</fullName>
        <ecNumber evidence="1">3.6.4.-</ecNumber>
    </recommendedName>
    <alternativeName>
        <fullName>Peroxin-6</fullName>
    </alternativeName>
    <alternativeName>
        <fullName>Peroxisomal biogenesis factor 6</fullName>
    </alternativeName>
</protein>
<accession>Q9UVU5</accession>
<dbReference type="EC" id="3.6.4.-" evidence="1"/>
<dbReference type="EMBL" id="AF129874">
    <property type="protein sequence ID" value="AAD52812.1"/>
    <property type="molecule type" value="Genomic_DNA"/>
</dbReference>
<dbReference type="SMR" id="Q9UVU5"/>
<dbReference type="GO" id="GO:0005829">
    <property type="term" value="C:cytosol"/>
    <property type="evidence" value="ECO:0007669"/>
    <property type="project" value="UniProtKB-SubCell"/>
</dbReference>
<dbReference type="GO" id="GO:0005778">
    <property type="term" value="C:peroxisomal membrane"/>
    <property type="evidence" value="ECO:0007669"/>
    <property type="project" value="UniProtKB-SubCell"/>
</dbReference>
<dbReference type="GO" id="GO:0005524">
    <property type="term" value="F:ATP binding"/>
    <property type="evidence" value="ECO:0007669"/>
    <property type="project" value="UniProtKB-KW"/>
</dbReference>
<dbReference type="GO" id="GO:0016887">
    <property type="term" value="F:ATP hydrolysis activity"/>
    <property type="evidence" value="ECO:0007669"/>
    <property type="project" value="InterPro"/>
</dbReference>
<dbReference type="GO" id="GO:0016558">
    <property type="term" value="P:protein import into peroxisome matrix"/>
    <property type="evidence" value="ECO:0007669"/>
    <property type="project" value="TreeGrafter"/>
</dbReference>
<dbReference type="CDD" id="cd19527">
    <property type="entry name" value="RecA-like_PEX6_r2"/>
    <property type="match status" value="1"/>
</dbReference>
<dbReference type="FunFam" id="3.40.50.300:FF:000109">
    <property type="entry name" value="Peroxisomal biogenesis factor 6"/>
    <property type="match status" value="1"/>
</dbReference>
<dbReference type="FunFam" id="1.10.8.60:FF:000039">
    <property type="entry name" value="peroxisome biogenesis factor 6"/>
    <property type="match status" value="1"/>
</dbReference>
<dbReference type="Gene3D" id="1.10.8.60">
    <property type="match status" value="2"/>
</dbReference>
<dbReference type="Gene3D" id="3.40.50.300">
    <property type="entry name" value="P-loop containing nucleotide triphosphate hydrolases"/>
    <property type="match status" value="2"/>
</dbReference>
<dbReference type="InterPro" id="IPR003593">
    <property type="entry name" value="AAA+_ATPase"/>
</dbReference>
<dbReference type="InterPro" id="IPR050168">
    <property type="entry name" value="AAA_ATPase_domain"/>
</dbReference>
<dbReference type="InterPro" id="IPR003959">
    <property type="entry name" value="ATPase_AAA_core"/>
</dbReference>
<dbReference type="InterPro" id="IPR003960">
    <property type="entry name" value="ATPase_AAA_CS"/>
</dbReference>
<dbReference type="InterPro" id="IPR027417">
    <property type="entry name" value="P-loop_NTPase"/>
</dbReference>
<dbReference type="InterPro" id="IPR056995">
    <property type="entry name" value="PEX6_4th_dom"/>
</dbReference>
<dbReference type="InterPro" id="IPR047533">
    <property type="entry name" value="RecA-like_PEX6_r2"/>
</dbReference>
<dbReference type="PANTHER" id="PTHR23077">
    <property type="entry name" value="AAA-FAMILY ATPASE"/>
    <property type="match status" value="1"/>
</dbReference>
<dbReference type="PANTHER" id="PTHR23077:SF9">
    <property type="entry name" value="PEROXISOMAL ATPASE PEX6"/>
    <property type="match status" value="1"/>
</dbReference>
<dbReference type="Pfam" id="PF00004">
    <property type="entry name" value="AAA"/>
    <property type="match status" value="2"/>
</dbReference>
<dbReference type="Pfam" id="PF23315">
    <property type="entry name" value="PEX6_4th"/>
    <property type="match status" value="1"/>
</dbReference>
<dbReference type="SMART" id="SM00382">
    <property type="entry name" value="AAA"/>
    <property type="match status" value="1"/>
</dbReference>
<dbReference type="SUPFAM" id="SSF52540">
    <property type="entry name" value="P-loop containing nucleoside triphosphate hydrolases"/>
    <property type="match status" value="2"/>
</dbReference>
<dbReference type="PROSITE" id="PS00674">
    <property type="entry name" value="AAA"/>
    <property type="match status" value="1"/>
</dbReference>